<gene>
    <name type="ordered locus">RP027</name>
</gene>
<protein>
    <recommendedName>
        <fullName>Uncharacterized protein RP027</fullName>
    </recommendedName>
</protein>
<dbReference type="EMBL" id="AJ235270">
    <property type="protein sequence ID" value="CAA14498.1"/>
    <property type="molecule type" value="Genomic_DNA"/>
</dbReference>
<dbReference type="PIR" id="C71710">
    <property type="entry name" value="C71710"/>
</dbReference>
<dbReference type="RefSeq" id="NP_220421.1">
    <property type="nucleotide sequence ID" value="NC_000963.1"/>
</dbReference>
<dbReference type="SMR" id="Q9ZEB7"/>
<dbReference type="STRING" id="272947.gene:17555110"/>
<dbReference type="EnsemblBacteria" id="CAA14498">
    <property type="protein sequence ID" value="CAA14498"/>
    <property type="gene ID" value="CAA14498"/>
</dbReference>
<dbReference type="KEGG" id="rpr:RP027"/>
<dbReference type="PATRIC" id="fig|272947.5.peg.27"/>
<dbReference type="eggNOG" id="COG4797">
    <property type="taxonomic scope" value="Bacteria"/>
</dbReference>
<dbReference type="HOGENOM" id="CLU_1000701_0_0_5"/>
<dbReference type="OrthoDB" id="5298787at2"/>
<dbReference type="Proteomes" id="UP000002480">
    <property type="component" value="Chromosome"/>
</dbReference>
<dbReference type="GO" id="GO:0016278">
    <property type="term" value="F:lysine N-methyltransferase activity"/>
    <property type="evidence" value="ECO:0000314"/>
    <property type="project" value="CACAO"/>
</dbReference>
<dbReference type="InterPro" id="IPR048976">
    <property type="entry name" value="PKMT_C"/>
</dbReference>
<dbReference type="Pfam" id="PF21782">
    <property type="entry name" value="PKMT_2nd"/>
    <property type="match status" value="1"/>
</dbReference>
<reference key="1">
    <citation type="journal article" date="1998" name="Nature">
        <title>The genome sequence of Rickettsia prowazekii and the origin of mitochondria.</title>
        <authorList>
            <person name="Andersson S.G.E."/>
            <person name="Zomorodipour A."/>
            <person name="Andersson J.O."/>
            <person name="Sicheritz-Ponten T."/>
            <person name="Alsmark U.C.M."/>
            <person name="Podowski R.M."/>
            <person name="Naeslund A.K."/>
            <person name="Eriksson A.-S."/>
            <person name="Winkler H.H."/>
            <person name="Kurland C.G."/>
        </authorList>
    </citation>
    <scope>NUCLEOTIDE SEQUENCE [LARGE SCALE GENOMIC DNA]</scope>
    <source>
        <strain>Madrid E</strain>
    </source>
</reference>
<name>Y027_RICPR</name>
<proteinExistence type="predicted"/>
<accession>Q9ZEB7</accession>
<organism>
    <name type="scientific">Rickettsia prowazekii (strain Madrid E)</name>
    <dbReference type="NCBI Taxonomy" id="272947"/>
    <lineage>
        <taxon>Bacteria</taxon>
        <taxon>Pseudomonadati</taxon>
        <taxon>Pseudomonadota</taxon>
        <taxon>Alphaproteobacteria</taxon>
        <taxon>Rickettsiales</taxon>
        <taxon>Rickettsiaceae</taxon>
        <taxon>Rickettsieae</taxon>
        <taxon>Rickettsia</taxon>
        <taxon>typhus group</taxon>
    </lineage>
</organism>
<keyword id="KW-1185">Reference proteome</keyword>
<feature type="chain" id="PRO_0000101300" description="Uncharacterized protein RP027">
    <location>
        <begin position="1"/>
        <end position="252"/>
    </location>
</feature>
<sequence length="252" mass="29465">MDFITNRKFRSTLLCHQNIPINRKIEFENLKDFYTTFNIRPISSENKIDLNNEQENISFYYENLPEPFISTTSAIMKAILYVYAENISNPIRLEQVAKEAFKKLGKYQLQDFLAILEQHFITFIFQGYLKIFETKPHAIATITEKPKTSQFVRYQAKHAHFNNVTNMLSVTNRLNDMIGIPIHEKYILEMLDGTHNIDDIKKGMIEKINSKLLIACDNKGQAVTDPKLLKEFVDYIVNISLEKFRINYLLIG</sequence>